<evidence type="ECO:0000250" key="1"/>
<evidence type="ECO:0000255" key="2"/>
<evidence type="ECO:0000269" key="3">
    <source>
    </source>
</evidence>
<evidence type="ECO:0000303" key="4">
    <source>
    </source>
</evidence>
<evidence type="ECO:0000305" key="5"/>
<evidence type="ECO:0000305" key="6">
    <source>
    </source>
</evidence>
<gene>
    <name type="primary">Pal2</name>
    <name type="synonym">Pal</name>
    <name type="ORF">CG5472</name>
</gene>
<protein>
    <recommendedName>
        <fullName>Peptidyl-alpha-hydroxyglycine alpha-amidating lyase 2</fullName>
        <ecNumber>4.3.2.5</ecNumber>
    </recommendedName>
    <alternativeName>
        <fullName>Peptidylamidoglycolate lyase 2</fullName>
        <shortName evidence="4">dPAL2</shortName>
    </alternativeName>
</protein>
<keyword id="KW-1015">Disulfide bond</keyword>
<keyword id="KW-0325">Glycoprotein</keyword>
<keyword id="KW-0456">Lyase</keyword>
<keyword id="KW-0479">Metal-binding</keyword>
<keyword id="KW-1185">Reference proteome</keyword>
<keyword id="KW-0677">Repeat</keyword>
<keyword id="KW-0964">Secreted</keyword>
<keyword id="KW-0732">Signal</keyword>
<keyword id="KW-0862">Zinc</keyword>
<reference key="1">
    <citation type="submission" date="2000-08" db="EMBL/GenBank/DDBJ databases">
        <title>Molecular cloning of a peptidyl-alpha-hydroxyglycine alpha-amidating lyase from Drosophila melanogaster.</title>
        <authorList>
            <person name="Williamson M."/>
            <person name="Grimmelikhuijzen C.J.P."/>
        </authorList>
    </citation>
    <scope>NUCLEOTIDE SEQUENCE [MRNA]</scope>
</reference>
<reference key="2">
    <citation type="journal article" date="2000" name="Science">
        <title>The genome sequence of Drosophila melanogaster.</title>
        <authorList>
            <person name="Adams M.D."/>
            <person name="Celniker S.E."/>
            <person name="Holt R.A."/>
            <person name="Evans C.A."/>
            <person name="Gocayne J.D."/>
            <person name="Amanatides P.G."/>
            <person name="Scherer S.E."/>
            <person name="Li P.W."/>
            <person name="Hoskins R.A."/>
            <person name="Galle R.F."/>
            <person name="George R.A."/>
            <person name="Lewis S.E."/>
            <person name="Richards S."/>
            <person name="Ashburner M."/>
            <person name="Henderson S.N."/>
            <person name="Sutton G.G."/>
            <person name="Wortman J.R."/>
            <person name="Yandell M.D."/>
            <person name="Zhang Q."/>
            <person name="Chen L.X."/>
            <person name="Brandon R.C."/>
            <person name="Rogers Y.-H.C."/>
            <person name="Blazej R.G."/>
            <person name="Champe M."/>
            <person name="Pfeiffer B.D."/>
            <person name="Wan K.H."/>
            <person name="Doyle C."/>
            <person name="Baxter E.G."/>
            <person name="Helt G."/>
            <person name="Nelson C.R."/>
            <person name="Miklos G.L.G."/>
            <person name="Abril J.F."/>
            <person name="Agbayani A."/>
            <person name="An H.-J."/>
            <person name="Andrews-Pfannkoch C."/>
            <person name="Baldwin D."/>
            <person name="Ballew R.M."/>
            <person name="Basu A."/>
            <person name="Baxendale J."/>
            <person name="Bayraktaroglu L."/>
            <person name="Beasley E.M."/>
            <person name="Beeson K.Y."/>
            <person name="Benos P.V."/>
            <person name="Berman B.P."/>
            <person name="Bhandari D."/>
            <person name="Bolshakov S."/>
            <person name="Borkova D."/>
            <person name="Botchan M.R."/>
            <person name="Bouck J."/>
            <person name="Brokstein P."/>
            <person name="Brottier P."/>
            <person name="Burtis K.C."/>
            <person name="Busam D.A."/>
            <person name="Butler H."/>
            <person name="Cadieu E."/>
            <person name="Center A."/>
            <person name="Chandra I."/>
            <person name="Cherry J.M."/>
            <person name="Cawley S."/>
            <person name="Dahlke C."/>
            <person name="Davenport L.B."/>
            <person name="Davies P."/>
            <person name="de Pablos B."/>
            <person name="Delcher A."/>
            <person name="Deng Z."/>
            <person name="Mays A.D."/>
            <person name="Dew I."/>
            <person name="Dietz S.M."/>
            <person name="Dodson K."/>
            <person name="Doup L.E."/>
            <person name="Downes M."/>
            <person name="Dugan-Rocha S."/>
            <person name="Dunkov B.C."/>
            <person name="Dunn P."/>
            <person name="Durbin K.J."/>
            <person name="Evangelista C.C."/>
            <person name="Ferraz C."/>
            <person name="Ferriera S."/>
            <person name="Fleischmann W."/>
            <person name="Fosler C."/>
            <person name="Gabrielian A.E."/>
            <person name="Garg N.S."/>
            <person name="Gelbart W.M."/>
            <person name="Glasser K."/>
            <person name="Glodek A."/>
            <person name="Gong F."/>
            <person name="Gorrell J.H."/>
            <person name="Gu Z."/>
            <person name="Guan P."/>
            <person name="Harris M."/>
            <person name="Harris N.L."/>
            <person name="Harvey D.A."/>
            <person name="Heiman T.J."/>
            <person name="Hernandez J.R."/>
            <person name="Houck J."/>
            <person name="Hostin D."/>
            <person name="Houston K.A."/>
            <person name="Howland T.J."/>
            <person name="Wei M.-H."/>
            <person name="Ibegwam C."/>
            <person name="Jalali M."/>
            <person name="Kalush F."/>
            <person name="Karpen G.H."/>
            <person name="Ke Z."/>
            <person name="Kennison J.A."/>
            <person name="Ketchum K.A."/>
            <person name="Kimmel B.E."/>
            <person name="Kodira C.D."/>
            <person name="Kraft C.L."/>
            <person name="Kravitz S."/>
            <person name="Kulp D."/>
            <person name="Lai Z."/>
            <person name="Lasko P."/>
            <person name="Lei Y."/>
            <person name="Levitsky A.A."/>
            <person name="Li J.H."/>
            <person name="Li Z."/>
            <person name="Liang Y."/>
            <person name="Lin X."/>
            <person name="Liu X."/>
            <person name="Mattei B."/>
            <person name="McIntosh T.C."/>
            <person name="McLeod M.P."/>
            <person name="McPherson D."/>
            <person name="Merkulov G."/>
            <person name="Milshina N.V."/>
            <person name="Mobarry C."/>
            <person name="Morris J."/>
            <person name="Moshrefi A."/>
            <person name="Mount S.M."/>
            <person name="Moy M."/>
            <person name="Murphy B."/>
            <person name="Murphy L."/>
            <person name="Muzny D.M."/>
            <person name="Nelson D.L."/>
            <person name="Nelson D.R."/>
            <person name="Nelson K.A."/>
            <person name="Nixon K."/>
            <person name="Nusskern D.R."/>
            <person name="Pacleb J.M."/>
            <person name="Palazzolo M."/>
            <person name="Pittman G.S."/>
            <person name="Pan S."/>
            <person name="Pollard J."/>
            <person name="Puri V."/>
            <person name="Reese M.G."/>
            <person name="Reinert K."/>
            <person name="Remington K."/>
            <person name="Saunders R.D.C."/>
            <person name="Scheeler F."/>
            <person name="Shen H."/>
            <person name="Shue B.C."/>
            <person name="Siden-Kiamos I."/>
            <person name="Simpson M."/>
            <person name="Skupski M.P."/>
            <person name="Smith T.J."/>
            <person name="Spier E."/>
            <person name="Spradling A.C."/>
            <person name="Stapleton M."/>
            <person name="Strong R."/>
            <person name="Sun E."/>
            <person name="Svirskas R."/>
            <person name="Tector C."/>
            <person name="Turner R."/>
            <person name="Venter E."/>
            <person name="Wang A.H."/>
            <person name="Wang X."/>
            <person name="Wang Z.-Y."/>
            <person name="Wassarman D.A."/>
            <person name="Weinstock G.M."/>
            <person name="Weissenbach J."/>
            <person name="Williams S.M."/>
            <person name="Woodage T."/>
            <person name="Worley K.C."/>
            <person name="Wu D."/>
            <person name="Yang S."/>
            <person name="Yao Q.A."/>
            <person name="Ye J."/>
            <person name="Yeh R.-F."/>
            <person name="Zaveri J.S."/>
            <person name="Zhan M."/>
            <person name="Zhang G."/>
            <person name="Zhao Q."/>
            <person name="Zheng L."/>
            <person name="Zheng X.H."/>
            <person name="Zhong F.N."/>
            <person name="Zhong W."/>
            <person name="Zhou X."/>
            <person name="Zhu S.C."/>
            <person name="Zhu X."/>
            <person name="Smith H.O."/>
            <person name="Gibbs R.A."/>
            <person name="Myers E.W."/>
            <person name="Rubin G.M."/>
            <person name="Venter J.C."/>
        </authorList>
    </citation>
    <scope>NUCLEOTIDE SEQUENCE [LARGE SCALE GENOMIC DNA]</scope>
    <source>
        <strain>Berkeley</strain>
    </source>
</reference>
<reference key="3">
    <citation type="journal article" date="2002" name="Genome Biol.">
        <title>Annotation of the Drosophila melanogaster euchromatic genome: a systematic review.</title>
        <authorList>
            <person name="Misra S."/>
            <person name="Crosby M.A."/>
            <person name="Mungall C.J."/>
            <person name="Matthews B.B."/>
            <person name="Campbell K.S."/>
            <person name="Hradecky P."/>
            <person name="Huang Y."/>
            <person name="Kaminker J.S."/>
            <person name="Millburn G.H."/>
            <person name="Prochnik S.E."/>
            <person name="Smith C.D."/>
            <person name="Tupy J.L."/>
            <person name="Whitfield E.J."/>
            <person name="Bayraktaroglu L."/>
            <person name="Berman B.P."/>
            <person name="Bettencourt B.R."/>
            <person name="Celniker S.E."/>
            <person name="de Grey A.D.N.J."/>
            <person name="Drysdale R.A."/>
            <person name="Harris N.L."/>
            <person name="Richter J."/>
            <person name="Russo S."/>
            <person name="Schroeder A.J."/>
            <person name="Shu S.Q."/>
            <person name="Stapleton M."/>
            <person name="Yamada C."/>
            <person name="Ashburner M."/>
            <person name="Gelbart W.M."/>
            <person name="Rubin G.M."/>
            <person name="Lewis S.E."/>
        </authorList>
    </citation>
    <scope>GENOME REANNOTATION</scope>
    <source>
        <strain>Berkeley</strain>
    </source>
</reference>
<reference key="4">
    <citation type="journal article" date="2002" name="Genome Biol.">
        <title>A Drosophila full-length cDNA resource.</title>
        <authorList>
            <person name="Stapleton M."/>
            <person name="Carlson J.W."/>
            <person name="Brokstein P."/>
            <person name="Yu C."/>
            <person name="Champe M."/>
            <person name="George R.A."/>
            <person name="Guarin H."/>
            <person name="Kronmiller B."/>
            <person name="Pacleb J.M."/>
            <person name="Park S."/>
            <person name="Wan K.H."/>
            <person name="Rubin G.M."/>
            <person name="Celniker S.E."/>
        </authorList>
    </citation>
    <scope>NUCLEOTIDE SEQUENCE [LARGE SCALE MRNA]</scope>
    <source>
        <strain>Berkeley</strain>
        <tissue>Head</tissue>
    </source>
</reference>
<reference key="5">
    <citation type="journal article" date="2004" name="J. Neurochem.">
        <title>Drosophila uses two distinct neuropeptide amidating enzymes, dPAL1 and dPAL2.</title>
        <authorList>
            <person name="Han M."/>
            <person name="Park D."/>
            <person name="Vanderzalm P.J."/>
            <person name="Mains R.E."/>
            <person name="Eipper B.A."/>
            <person name="Taghert P.H."/>
        </authorList>
    </citation>
    <scope>FUNCTION</scope>
    <scope>CATALYTIC ACTIVITY</scope>
    <scope>BIOPHYSICOCHEMICAL PROPERTIES</scope>
    <scope>SUBCELLULAR LOCATION</scope>
    <scope>GLYCOSYLATION</scope>
    <scope>TISSUE SPECIFICITY</scope>
</reference>
<proteinExistence type="evidence at protein level"/>
<sequence length="406" mass="44712">MSRLLFVALLAISLGYVASSSSNHLPAGLAMDLGPGVNLNERFFDQVRALIKRRLQEKGLAKPEQPELAMPLTDDDAVALQNQRSYDNVPLPAASVPTPVLVENWPTEQHSFGQVTAVAVDPQGSPVVFHRAERYWDVNTFNESNIYYLIEYGPIKENTIYVLDAKTGAIKSGWGSNMFYMPHGLTIDLHGNYWITDVAMHQAFKFKPFSNKPLLTIGKRFRPGSSVKHLCKPTSIAVATTGEFFIADGYCNSRILKFNAAGKLLRTIPQPPEFLSLQVPHAITLLEHLDLLCIADRENMRVVCPKAGLISSHGEGEPAATIQEPDLGRVFGVASFGDIVFAVNGPTSMLPVRGFTIDPRSETIIGHWGEFKNPHSMAVSVNGSALYVTEIGTNHQTNRVWKYVLA</sequence>
<feature type="signal peptide" evidence="2">
    <location>
        <begin position="1"/>
        <end position="19"/>
    </location>
</feature>
<feature type="chain" id="PRO_0000248574" description="Peptidyl-alpha-hydroxyglycine alpha-amidating lyase 2">
    <location>
        <begin position="20"/>
        <end position="406"/>
    </location>
</feature>
<feature type="repeat" description="NHL 1">
    <location>
        <begin position="168"/>
        <end position="209"/>
    </location>
</feature>
<feature type="repeat" description="NHL 2">
    <location>
        <begin position="218"/>
        <end position="261"/>
    </location>
</feature>
<feature type="repeat" description="NHL 3">
    <location>
        <begin position="264"/>
        <end position="308"/>
    </location>
</feature>
<feature type="repeat" description="NHL 4">
    <location>
        <begin position="358"/>
        <end position="402"/>
    </location>
</feature>
<feature type="disulfide bond" evidence="1">
    <location>
        <begin position="231"/>
        <end position="251"/>
    </location>
</feature>
<feature type="disulfide bond" evidence="1">
    <location>
        <begin position="293"/>
        <end position="304"/>
    </location>
</feature>
<feature type="sequence conflict" description="In Ref. 1; AAG01895." evidence="5" ref="1">
    <original>S</original>
    <variation>T</variation>
    <location>
        <position position="13"/>
    </location>
</feature>
<feature type="sequence conflict" description="In Ref. 1; AAG01895." evidence="5" ref="1">
    <original>Y</original>
    <variation>C</variation>
    <location>
        <position position="16"/>
    </location>
</feature>
<feature type="sequence conflict" description="In Ref. 1; AAG01895." evidence="5" ref="1">
    <original>N</original>
    <variation>S</variation>
    <location>
        <position position="40"/>
    </location>
</feature>
<feature type="sequence conflict" description="In Ref. 1; AAG01895." evidence="5" ref="1">
    <original>N</original>
    <variation>S</variation>
    <location>
        <position position="382"/>
    </location>
</feature>
<name>PAL2_DROME</name>
<organism>
    <name type="scientific">Drosophila melanogaster</name>
    <name type="common">Fruit fly</name>
    <dbReference type="NCBI Taxonomy" id="7227"/>
    <lineage>
        <taxon>Eukaryota</taxon>
        <taxon>Metazoa</taxon>
        <taxon>Ecdysozoa</taxon>
        <taxon>Arthropoda</taxon>
        <taxon>Hexapoda</taxon>
        <taxon>Insecta</taxon>
        <taxon>Pterygota</taxon>
        <taxon>Neoptera</taxon>
        <taxon>Endopterygota</taxon>
        <taxon>Diptera</taxon>
        <taxon>Brachycera</taxon>
        <taxon>Muscomorpha</taxon>
        <taxon>Ephydroidea</taxon>
        <taxon>Drosophilidae</taxon>
        <taxon>Drosophila</taxon>
        <taxon>Sophophora</taxon>
    </lineage>
</organism>
<comment type="function">
    <text evidence="3">Peptidyl-alpha-hydroxylglycine alpha-amidating lyase that catalyzes an essential reaction in C-terminal alpha-amidation of peptides. Mediates the dismutation of the unstable peptidyl(2-hydroxyglycine) intermediate to glyoxylate and the corresponding desglycine peptide amide. C-terminal amidation of peptides such as neuropeptides is essential for full biological activity.</text>
</comment>
<comment type="catalytic activity">
    <reaction evidence="3">
        <text>a [peptide]-C-terminal (2S)-2-hydroxyglycine = a [peptide]-C-terminal amide + glyoxylate</text>
        <dbReference type="Rhea" id="RHEA:20924"/>
        <dbReference type="Rhea" id="RHEA-COMP:13485"/>
        <dbReference type="Rhea" id="RHEA-COMP:15321"/>
        <dbReference type="ChEBI" id="CHEBI:36655"/>
        <dbReference type="ChEBI" id="CHEBI:137001"/>
        <dbReference type="ChEBI" id="CHEBI:142768"/>
        <dbReference type="EC" id="4.3.2.5"/>
    </reaction>
    <physiologicalReaction direction="left-to-right" evidence="3">
        <dbReference type="Rhea" id="RHEA:20925"/>
    </physiologicalReaction>
</comment>
<comment type="cofactor">
    <cofactor evidence="1">
        <name>Zn(2+)</name>
        <dbReference type="ChEBI" id="CHEBI:29105"/>
    </cofactor>
</comment>
<comment type="biophysicochemical properties">
    <kinetics>
        <KM evidence="3">70 uM for peptidyl-alpha-hydroxyglycine</KM>
    </kinetics>
</comment>
<comment type="subcellular location">
    <subcellularLocation>
        <location evidence="6">Secreted</location>
    </subcellularLocation>
</comment>
<comment type="tissue specificity">
    <text evidence="3">Only found in a subset of neurons distributed throughout all levels of the central nervous system (CNS). Present in at least some neuroendocrine cells. In adult brains, it is only present in a small handful of cells, the majority of which being distributed in distal parts of the medulla, with a higher expression in the posterior surface of the brain (at protein level).</text>
</comment>
<comment type="PTM">
    <text evidence="6">N-glycosylated.</text>
</comment>
<comment type="similarity">
    <text evidence="5">Belongs to the peptidyl-alpha-hydroxyglycine alpha-amidating lyase family.</text>
</comment>
<dbReference type="EC" id="4.3.2.5"/>
<dbReference type="EMBL" id="AY007228">
    <property type="protein sequence ID" value="AAG01895.1"/>
    <property type="molecule type" value="mRNA"/>
</dbReference>
<dbReference type="EMBL" id="AE013599">
    <property type="protein sequence ID" value="AAF47043.2"/>
    <property type="molecule type" value="Genomic_DNA"/>
</dbReference>
<dbReference type="EMBL" id="AE013599">
    <property type="protein sequence ID" value="AAS64763.2"/>
    <property type="molecule type" value="Genomic_DNA"/>
</dbReference>
<dbReference type="EMBL" id="AY119165">
    <property type="protein sequence ID" value="AAM51025.1"/>
    <property type="molecule type" value="mRNA"/>
</dbReference>
<dbReference type="RefSeq" id="NP_001286776.1">
    <property type="nucleotide sequence ID" value="NM_001299847.1"/>
</dbReference>
<dbReference type="RefSeq" id="NP_525118.2">
    <property type="nucleotide sequence ID" value="NM_080379.5"/>
</dbReference>
<dbReference type="RefSeq" id="NP_995929.2">
    <property type="nucleotide sequence ID" value="NM_206207.3"/>
</dbReference>
<dbReference type="SMR" id="Q9W1L5"/>
<dbReference type="BioGRID" id="63345">
    <property type="interactions" value="2"/>
</dbReference>
<dbReference type="FunCoup" id="Q9W1L5">
    <property type="interactions" value="22"/>
</dbReference>
<dbReference type="STRING" id="7227.FBpp0312237"/>
<dbReference type="PaxDb" id="7227-FBpp0088497"/>
<dbReference type="DNASU" id="37746"/>
<dbReference type="EnsemblMetazoa" id="FBtr0089500">
    <property type="protein sequence ID" value="FBpp0088497"/>
    <property type="gene ID" value="FBgn0262728"/>
</dbReference>
<dbReference type="EnsemblMetazoa" id="FBtr0301509">
    <property type="protein sequence ID" value="FBpp0290724"/>
    <property type="gene ID" value="FBgn0262728"/>
</dbReference>
<dbReference type="EnsemblMetazoa" id="FBtr0346652">
    <property type="protein sequence ID" value="FBpp0312237"/>
    <property type="gene ID" value="FBgn0262728"/>
</dbReference>
<dbReference type="GeneID" id="37746"/>
<dbReference type="KEGG" id="dme:Dmel_CG5472"/>
<dbReference type="UCSC" id="CG5472-RC">
    <property type="organism name" value="d. melanogaster"/>
</dbReference>
<dbReference type="AGR" id="FB:FBgn0262728"/>
<dbReference type="CTD" id="37746"/>
<dbReference type="FlyBase" id="FBgn0262728">
    <property type="gene designation" value="Pal2"/>
</dbReference>
<dbReference type="VEuPathDB" id="VectorBase:FBgn0262728"/>
<dbReference type="eggNOG" id="KOG3567">
    <property type="taxonomic scope" value="Eukaryota"/>
</dbReference>
<dbReference type="GeneTree" id="ENSGT00940000156369"/>
<dbReference type="HOGENOM" id="CLU_037899_6_0_1"/>
<dbReference type="InParanoid" id="Q9W1L5"/>
<dbReference type="OMA" id="NWPTDQH"/>
<dbReference type="OrthoDB" id="10018185at2759"/>
<dbReference type="PhylomeDB" id="Q9W1L5"/>
<dbReference type="BRENDA" id="4.3.2.5">
    <property type="organism ID" value="1994"/>
</dbReference>
<dbReference type="SABIO-RK" id="Q9W1L5"/>
<dbReference type="BioGRID-ORCS" id="37746">
    <property type="hits" value="0 hits in 1 CRISPR screen"/>
</dbReference>
<dbReference type="GenomeRNAi" id="37746"/>
<dbReference type="PRO" id="PR:Q9W1L5"/>
<dbReference type="Proteomes" id="UP000000803">
    <property type="component" value="Chromosome 2R"/>
</dbReference>
<dbReference type="Bgee" id="FBgn0262728">
    <property type="expression patterns" value="Expressed in adult class III enteroendocrine cell in adult midgut (Drosophila) and 138 other cell types or tissues"/>
</dbReference>
<dbReference type="ExpressionAtlas" id="Q9W1L5">
    <property type="expression patterns" value="baseline and differential"/>
</dbReference>
<dbReference type="GO" id="GO:0005576">
    <property type="term" value="C:extracellular region"/>
    <property type="evidence" value="ECO:0000314"/>
    <property type="project" value="UniProtKB"/>
</dbReference>
<dbReference type="GO" id="GO:0046872">
    <property type="term" value="F:metal ion binding"/>
    <property type="evidence" value="ECO:0007669"/>
    <property type="project" value="UniProtKB-KW"/>
</dbReference>
<dbReference type="GO" id="GO:0004598">
    <property type="term" value="F:peptidylamidoglycolate lyase activity"/>
    <property type="evidence" value="ECO:0000314"/>
    <property type="project" value="UniProtKB"/>
</dbReference>
<dbReference type="CDD" id="cd14958">
    <property type="entry name" value="NHL_PAL_like"/>
    <property type="match status" value="1"/>
</dbReference>
<dbReference type="FunFam" id="2.120.10.30:FF:000054">
    <property type="entry name" value="Peptidyl-alpha-hydroxyglycine alpha-amidating lyase 1"/>
    <property type="match status" value="1"/>
</dbReference>
<dbReference type="Gene3D" id="2.120.10.30">
    <property type="entry name" value="TolB, C-terminal domain"/>
    <property type="match status" value="1"/>
</dbReference>
<dbReference type="InterPro" id="IPR011042">
    <property type="entry name" value="6-blade_b-propeller_TolB-like"/>
</dbReference>
<dbReference type="InterPro" id="IPR001258">
    <property type="entry name" value="NHL_repeat"/>
</dbReference>
<dbReference type="PANTHER" id="PTHR10680:SF37">
    <property type="entry name" value="PEPTIDYL-ALPHA-HYDROXYGLYCINE ALPHA-AMIDATING LYASE 2"/>
    <property type="match status" value="1"/>
</dbReference>
<dbReference type="PANTHER" id="PTHR10680">
    <property type="entry name" value="PEPTIDYL-GLYCINE ALPHA-AMIDATING MONOOXYGENASE"/>
    <property type="match status" value="1"/>
</dbReference>
<dbReference type="Pfam" id="PF01436">
    <property type="entry name" value="NHL"/>
    <property type="match status" value="1"/>
</dbReference>
<dbReference type="SUPFAM" id="SSF101898">
    <property type="entry name" value="NHL repeat"/>
    <property type="match status" value="1"/>
</dbReference>
<dbReference type="PROSITE" id="PS51125">
    <property type="entry name" value="NHL"/>
    <property type="match status" value="4"/>
</dbReference>
<accession>Q9W1L5</accession>
<accession>A4UZT8</accession>
<accession>Q7KVI0</accession>
<accession>Q9GPF3</accession>